<protein>
    <recommendedName>
        <fullName evidence="3">Small ribosomal subunit protein eS17</fullName>
    </recommendedName>
    <alternativeName>
        <fullName>40S ribosomal protein S17</fullName>
    </alternativeName>
</protein>
<keyword id="KW-0963">Cytoplasm</keyword>
<keyword id="KW-1017">Isopeptide bond</keyword>
<keyword id="KW-0597">Phosphoprotein</keyword>
<keyword id="KW-0687">Ribonucleoprotein</keyword>
<keyword id="KW-0689">Ribosomal protein</keyword>
<keyword id="KW-0832">Ubl conjugation</keyword>
<reference key="1">
    <citation type="journal article" date="1986" name="Proc. Natl. Acad. Sci. U.S.A.">
        <title>Homologous ribosomal proteins in bacteria, yeast, and humans.</title>
        <authorList>
            <person name="Chen I.-T."/>
            <person name="Dixit A."/>
            <person name="Rhoads D.D."/>
            <person name="Roufa D.J."/>
        </authorList>
    </citation>
    <scope>NUCLEOTIDE SEQUENCE [MRNA]</scope>
</reference>
<comment type="function">
    <text evidence="1">Component of the small ribosomal subunit. The ribosome is a large ribonucleoprotein complex responsible for the synthesis of proteins in the cell.</text>
</comment>
<comment type="subunit">
    <text evidence="1">Component of the small ribosomal subunit.</text>
</comment>
<comment type="subcellular location">
    <subcellularLocation>
        <location evidence="1">Cytoplasm</location>
    </subcellularLocation>
</comment>
<comment type="PTM">
    <text evidence="1">Ubiquitinated at Lys-103 by RNF14 and RNF25 in response to ribosome collisions (ribosome stalling).</text>
</comment>
<comment type="similarity">
    <text evidence="3">Belongs to the eukaryotic ribosomal protein eS17 family.</text>
</comment>
<feature type="chain" id="PRO_0000141523" description="Small ribosomal subunit protein eS17">
    <location>
        <begin position="1"/>
        <end position="135"/>
    </location>
</feature>
<feature type="modified residue" description="N6-succinyllysine" evidence="2">
    <location>
        <position position="19"/>
    </location>
</feature>
<feature type="modified residue" description="Phosphoserine" evidence="1">
    <location>
        <position position="113"/>
    </location>
</feature>
<feature type="modified residue" description="Phosphothreonine" evidence="1">
    <location>
        <position position="130"/>
    </location>
</feature>
<feature type="cross-link" description="Glycyl lysine isopeptide (Lys-Gly) (interchain with G-Cter in SUMO1); alternate" evidence="1">
    <location>
        <position position="103"/>
    </location>
</feature>
<feature type="cross-link" description="Glycyl lysine isopeptide (Lys-Gly) (interchain with G-Cter in SUMO2); alternate" evidence="1">
    <location>
        <position position="103"/>
    </location>
</feature>
<organism>
    <name type="scientific">Cricetulus griseus</name>
    <name type="common">Chinese hamster</name>
    <name type="synonym">Cricetulus barabensis griseus</name>
    <dbReference type="NCBI Taxonomy" id="10029"/>
    <lineage>
        <taxon>Eukaryota</taxon>
        <taxon>Metazoa</taxon>
        <taxon>Chordata</taxon>
        <taxon>Craniata</taxon>
        <taxon>Vertebrata</taxon>
        <taxon>Euteleostomi</taxon>
        <taxon>Mammalia</taxon>
        <taxon>Eutheria</taxon>
        <taxon>Euarchontoglires</taxon>
        <taxon>Glires</taxon>
        <taxon>Rodentia</taxon>
        <taxon>Myomorpha</taxon>
        <taxon>Muroidea</taxon>
        <taxon>Cricetidae</taxon>
        <taxon>Cricetinae</taxon>
        <taxon>Cricetulus</taxon>
    </lineage>
</organism>
<proteinExistence type="evidence at transcript level"/>
<sequence length="135" mass="15524">MGRVRTKTVKKAARVIIEKYYTRLGNDFHTNKRVCEEIAIIPSKKLRNKIAGYVTHLMKRIQRGPVRGISIKLQEEERERRDNYVPEVSALDQEIIEVDPDTKEMLKLLDFGSLSNLQVTQPTVGMNFKTPRGAV</sequence>
<evidence type="ECO:0000250" key="1">
    <source>
        <dbReference type="UniProtKB" id="P08708"/>
    </source>
</evidence>
<evidence type="ECO:0000250" key="2">
    <source>
        <dbReference type="UniProtKB" id="P63276"/>
    </source>
</evidence>
<evidence type="ECO:0000305" key="3"/>
<dbReference type="EMBL" id="M13933">
    <property type="protein sequence ID" value="AAA37018.1"/>
    <property type="molecule type" value="mRNA"/>
</dbReference>
<dbReference type="RefSeq" id="NP_001230969.1">
    <property type="nucleotide sequence ID" value="NM_001244040.1"/>
</dbReference>
<dbReference type="SMR" id="P63274"/>
<dbReference type="PaxDb" id="10029-NP_001230969.1"/>
<dbReference type="GeneID" id="100689053"/>
<dbReference type="KEGG" id="cge:100689053"/>
<dbReference type="CTD" id="6218"/>
<dbReference type="eggNOG" id="KOG0187">
    <property type="taxonomic scope" value="Eukaryota"/>
</dbReference>
<dbReference type="OMA" id="HTEHIEV"/>
<dbReference type="OrthoDB" id="1727351at2759"/>
<dbReference type="Proteomes" id="UP000694386">
    <property type="component" value="Unplaced"/>
</dbReference>
<dbReference type="Proteomes" id="UP001108280">
    <property type="component" value="Chromosome 3"/>
</dbReference>
<dbReference type="GO" id="GO:0022626">
    <property type="term" value="C:cytosolic ribosome"/>
    <property type="evidence" value="ECO:0007669"/>
    <property type="project" value="UniProtKB-ARBA"/>
</dbReference>
<dbReference type="GO" id="GO:1990904">
    <property type="term" value="C:ribonucleoprotein complex"/>
    <property type="evidence" value="ECO:0007669"/>
    <property type="project" value="UniProtKB-KW"/>
</dbReference>
<dbReference type="GO" id="GO:0003735">
    <property type="term" value="F:structural constituent of ribosome"/>
    <property type="evidence" value="ECO:0007669"/>
    <property type="project" value="InterPro"/>
</dbReference>
<dbReference type="GO" id="GO:0006412">
    <property type="term" value="P:translation"/>
    <property type="evidence" value="ECO:0007669"/>
    <property type="project" value="InterPro"/>
</dbReference>
<dbReference type="FunFam" id="1.10.60.20:FF:000001">
    <property type="entry name" value="40S ribosomal protein S17"/>
    <property type="match status" value="1"/>
</dbReference>
<dbReference type="Gene3D" id="1.10.60.20">
    <property type="entry name" value="Ribosomal protein S17e-like"/>
    <property type="match status" value="1"/>
</dbReference>
<dbReference type="HAMAP" id="MF_00511">
    <property type="entry name" value="Ribosomal_eS17"/>
    <property type="match status" value="1"/>
</dbReference>
<dbReference type="InterPro" id="IPR001210">
    <property type="entry name" value="Ribosomal_eS17"/>
</dbReference>
<dbReference type="InterPro" id="IPR018273">
    <property type="entry name" value="Ribosomal_eS17_CS"/>
</dbReference>
<dbReference type="InterPro" id="IPR036401">
    <property type="entry name" value="Ribosomal_eS17_sf"/>
</dbReference>
<dbReference type="NCBIfam" id="NF002242">
    <property type="entry name" value="PRK01151.1"/>
    <property type="match status" value="1"/>
</dbReference>
<dbReference type="PANTHER" id="PTHR10732">
    <property type="entry name" value="40S RIBOSOMAL PROTEIN S17"/>
    <property type="match status" value="1"/>
</dbReference>
<dbReference type="PANTHER" id="PTHR10732:SF0">
    <property type="entry name" value="40S RIBOSOMAL PROTEIN S17"/>
    <property type="match status" value="1"/>
</dbReference>
<dbReference type="Pfam" id="PF00833">
    <property type="entry name" value="Ribosomal_S17e"/>
    <property type="match status" value="1"/>
</dbReference>
<dbReference type="SUPFAM" id="SSF116820">
    <property type="entry name" value="Rps17e-like"/>
    <property type="match status" value="1"/>
</dbReference>
<dbReference type="PROSITE" id="PS00712">
    <property type="entry name" value="RIBOSOMAL_S17E"/>
    <property type="match status" value="1"/>
</dbReference>
<name>RS17_CRIGR</name>
<accession>P63274</accession>
<accession>P06584</accession>
<gene>
    <name type="primary">RPS17</name>
</gene>